<organism>
    <name type="scientific">Picea abies</name>
    <name type="common">Norway spruce</name>
    <name type="synonym">Picea excelsa</name>
    <dbReference type="NCBI Taxonomy" id="3329"/>
    <lineage>
        <taxon>Eukaryota</taxon>
        <taxon>Viridiplantae</taxon>
        <taxon>Streptophyta</taxon>
        <taxon>Embryophyta</taxon>
        <taxon>Tracheophyta</taxon>
        <taxon>Spermatophyta</taxon>
        <taxon>Pinopsida</taxon>
        <taxon>Pinidae</taxon>
        <taxon>Conifers I</taxon>
        <taxon>Pinales</taxon>
        <taxon>Pinaceae</taxon>
        <taxon>Picea</taxon>
    </lineage>
</organism>
<protein>
    <recommendedName>
        <fullName evidence="1">Ribulose bisphosphate carboxylase large chain</fullName>
        <shortName evidence="1">RuBisCO large subunit</shortName>
        <ecNumber evidence="1">4.1.1.39</ecNumber>
    </recommendedName>
</protein>
<gene>
    <name evidence="1" type="primary">rbcL</name>
</gene>
<feature type="propeptide" id="PRO_0000031349" evidence="1">
    <location>
        <begin position="1"/>
        <end position="2"/>
    </location>
</feature>
<feature type="chain" id="PRO_0000031350" description="Ribulose bisphosphate carboxylase large chain">
    <location>
        <begin position="3"/>
        <end position="475"/>
    </location>
</feature>
<feature type="active site" description="Proton acceptor" evidence="1">
    <location>
        <position position="175"/>
    </location>
</feature>
<feature type="active site" description="Proton acceptor" evidence="1">
    <location>
        <position position="294"/>
    </location>
</feature>
<feature type="binding site" description="in homodimeric partner" evidence="1">
    <location>
        <position position="123"/>
    </location>
    <ligand>
        <name>substrate</name>
    </ligand>
</feature>
<feature type="binding site" evidence="1">
    <location>
        <position position="173"/>
    </location>
    <ligand>
        <name>substrate</name>
    </ligand>
</feature>
<feature type="binding site" evidence="1">
    <location>
        <position position="177"/>
    </location>
    <ligand>
        <name>substrate</name>
    </ligand>
</feature>
<feature type="binding site" description="via carbamate group" evidence="1">
    <location>
        <position position="201"/>
    </location>
    <ligand>
        <name>Mg(2+)</name>
        <dbReference type="ChEBI" id="CHEBI:18420"/>
    </ligand>
</feature>
<feature type="binding site" evidence="1">
    <location>
        <position position="203"/>
    </location>
    <ligand>
        <name>Mg(2+)</name>
        <dbReference type="ChEBI" id="CHEBI:18420"/>
    </ligand>
</feature>
<feature type="binding site" evidence="1">
    <location>
        <position position="204"/>
    </location>
    <ligand>
        <name>Mg(2+)</name>
        <dbReference type="ChEBI" id="CHEBI:18420"/>
    </ligand>
</feature>
<feature type="binding site" evidence="1">
    <location>
        <position position="295"/>
    </location>
    <ligand>
        <name>substrate</name>
    </ligand>
</feature>
<feature type="binding site" evidence="1">
    <location>
        <position position="327"/>
    </location>
    <ligand>
        <name>substrate</name>
    </ligand>
</feature>
<feature type="binding site" evidence="1">
    <location>
        <position position="379"/>
    </location>
    <ligand>
        <name>substrate</name>
    </ligand>
</feature>
<feature type="site" description="Transition state stabilizer" evidence="1">
    <location>
        <position position="334"/>
    </location>
</feature>
<feature type="modified residue" description="N-acetylproline" evidence="1">
    <location>
        <position position="3"/>
    </location>
</feature>
<feature type="modified residue" description="N6,N6,N6-trimethyllysine" evidence="1">
    <location>
        <position position="14"/>
    </location>
</feature>
<feature type="modified residue" description="N6-carboxylysine" evidence="1">
    <location>
        <position position="201"/>
    </location>
</feature>
<feature type="disulfide bond" description="Interchain; in linked form" evidence="1">
    <location>
        <position position="247"/>
    </location>
</feature>
<feature type="sequence conflict" description="In Ref. 1; CAA53209." evidence="2" ref="1">
    <original>IY</original>
    <variation>LN</variation>
    <location>
        <begin position="225"/>
        <end position="226"/>
    </location>
</feature>
<feature type="sequence conflict" description="In Ref. 1; CAA53209." evidence="2" ref="1">
    <original>E</original>
    <variation>G</variation>
    <location>
        <position position="248"/>
    </location>
</feature>
<feature type="sequence conflict" description="In Ref. 1; CAA53209." evidence="2" ref="1">
    <original>I</original>
    <variation>N</variation>
    <location>
        <position position="264"/>
    </location>
</feature>
<feature type="sequence conflict" description="In Ref. 1; CAA53209." evidence="2" ref="1">
    <original>R</original>
    <variation>H</variation>
    <location>
        <position position="295"/>
    </location>
</feature>
<feature type="sequence conflict" description="In Ref. 1; CAA53209." evidence="2" ref="1">
    <original>S</original>
    <variation>C</variation>
    <location>
        <position position="449"/>
    </location>
</feature>
<name>RBL_PICAB</name>
<geneLocation type="chloroplast"/>
<evidence type="ECO:0000255" key="1">
    <source>
        <dbReference type="HAMAP-Rule" id="MF_01338"/>
    </source>
</evidence>
<evidence type="ECO:0000305" key="2"/>
<comment type="function">
    <text evidence="1">RuBisCO catalyzes two reactions: the carboxylation of D-ribulose 1,5-bisphosphate, the primary event in carbon dioxide fixation, as well as the oxidative fragmentation of the pentose substrate in the photorespiration process. Both reactions occur simultaneously and in competition at the same active site.</text>
</comment>
<comment type="catalytic activity">
    <reaction evidence="1">
        <text>2 (2R)-3-phosphoglycerate + 2 H(+) = D-ribulose 1,5-bisphosphate + CO2 + H2O</text>
        <dbReference type="Rhea" id="RHEA:23124"/>
        <dbReference type="ChEBI" id="CHEBI:15377"/>
        <dbReference type="ChEBI" id="CHEBI:15378"/>
        <dbReference type="ChEBI" id="CHEBI:16526"/>
        <dbReference type="ChEBI" id="CHEBI:57870"/>
        <dbReference type="ChEBI" id="CHEBI:58272"/>
        <dbReference type="EC" id="4.1.1.39"/>
    </reaction>
</comment>
<comment type="catalytic activity">
    <reaction evidence="1">
        <text>D-ribulose 1,5-bisphosphate + O2 = 2-phosphoglycolate + (2R)-3-phosphoglycerate + 2 H(+)</text>
        <dbReference type="Rhea" id="RHEA:36631"/>
        <dbReference type="ChEBI" id="CHEBI:15378"/>
        <dbReference type="ChEBI" id="CHEBI:15379"/>
        <dbReference type="ChEBI" id="CHEBI:57870"/>
        <dbReference type="ChEBI" id="CHEBI:58033"/>
        <dbReference type="ChEBI" id="CHEBI:58272"/>
    </reaction>
</comment>
<comment type="cofactor">
    <cofactor evidence="1">
        <name>Mg(2+)</name>
        <dbReference type="ChEBI" id="CHEBI:18420"/>
    </cofactor>
    <text evidence="1">Binds 1 Mg(2+) ion per subunit.</text>
</comment>
<comment type="subunit">
    <text evidence="1">Heterohexadecamer of 8 large chains and 8 small chains; disulfide-linked. The disulfide link is formed within the large subunit homodimers.</text>
</comment>
<comment type="subcellular location">
    <subcellularLocation>
        <location>Plastid</location>
        <location>Chloroplast</location>
    </subcellularLocation>
</comment>
<comment type="PTM">
    <text evidence="1">The disulfide bond which can form in the large chain dimeric partners within the hexadecamer appears to be associated with oxidative stress and protein turnover.</text>
</comment>
<comment type="miscellaneous">
    <text evidence="1">The basic functional RuBisCO is composed of a large chain homodimer in a 'head-to-tail' conformation. In form I RuBisCO this homodimer is arranged in a barrel-like tetramer with the small subunits forming a tetrameric 'cap' on each end of the 'barrel'.</text>
</comment>
<comment type="similarity">
    <text evidence="1">Belongs to the RuBisCO large chain family. Type I subfamily.</text>
</comment>
<sequence length="475" mass="52606">MSPKTETKASVGFKAGVKDYRLTYYTPEYQTKDTDILAAFRVTPQPGVPPEEAGAAVAAESSTGTWTTVWTDGLTSLDRYKGRCYDIEPVAGEESQFIAFVAYPLDLFEEGSVTNLFTSIVGNVFGFKALRALRLEDLRIPPAYSKTFQGPPHGIQVERDKLNKYGRPLLGCTIKPKLGLSAKNYGRAVYECLRGGLDFTKDDENVNSQPFMRWRDRFVFCAEAIYKAQAETGEIKGHYLNATAGTCEEMMKRAVFARELGVPIVMHDYLTGGFTANTSLAHYCRDNGLLLHIHRAMHAVIDRQKNHGMHFRVLAKALRMSGGDHIHGGTVVGKLEGEREITLGFVDLLRDDFIEKDRSRGIYFTQDWVSMPGVLPVASGGIHVWHMPALTEIFGDDSVLQFGGGTLGHPWGNAPGAVANRVALEACVQARNEGRDLAREGNEVIREASKWSPELAAACEIWKEIKFEFEAVDTI</sequence>
<dbReference type="EC" id="4.1.1.39" evidence="1"/>
<dbReference type="EMBL" id="X75478">
    <property type="protein sequence ID" value="CAA53209.1"/>
    <property type="molecule type" value="mRNA"/>
</dbReference>
<dbReference type="EMBL" id="AJ001004">
    <property type="protein sequence ID" value="CAA04459.1"/>
    <property type="molecule type" value="Genomic_DNA"/>
</dbReference>
<dbReference type="PIR" id="S38502">
    <property type="entry name" value="S38502"/>
</dbReference>
<dbReference type="PIR" id="T14830">
    <property type="entry name" value="T14830"/>
</dbReference>
<dbReference type="RefSeq" id="YP_008082819.1">
    <property type="nucleotide sequence ID" value="NC_021456.1"/>
</dbReference>
<dbReference type="SMR" id="P48711"/>
<dbReference type="GeneID" id="16185473"/>
<dbReference type="GO" id="GO:0009507">
    <property type="term" value="C:chloroplast"/>
    <property type="evidence" value="ECO:0007669"/>
    <property type="project" value="UniProtKB-SubCell"/>
</dbReference>
<dbReference type="GO" id="GO:0000287">
    <property type="term" value="F:magnesium ion binding"/>
    <property type="evidence" value="ECO:0007669"/>
    <property type="project" value="UniProtKB-UniRule"/>
</dbReference>
<dbReference type="GO" id="GO:0004497">
    <property type="term" value="F:monooxygenase activity"/>
    <property type="evidence" value="ECO:0007669"/>
    <property type="project" value="UniProtKB-KW"/>
</dbReference>
<dbReference type="GO" id="GO:0016984">
    <property type="term" value="F:ribulose-bisphosphate carboxylase activity"/>
    <property type="evidence" value="ECO:0007669"/>
    <property type="project" value="UniProtKB-UniRule"/>
</dbReference>
<dbReference type="GO" id="GO:0009853">
    <property type="term" value="P:photorespiration"/>
    <property type="evidence" value="ECO:0007669"/>
    <property type="project" value="UniProtKB-KW"/>
</dbReference>
<dbReference type="GO" id="GO:0019253">
    <property type="term" value="P:reductive pentose-phosphate cycle"/>
    <property type="evidence" value="ECO:0007669"/>
    <property type="project" value="UniProtKB-UniRule"/>
</dbReference>
<dbReference type="CDD" id="cd08212">
    <property type="entry name" value="RuBisCO_large_I"/>
    <property type="match status" value="1"/>
</dbReference>
<dbReference type="FunFam" id="3.20.20.110:FF:000001">
    <property type="entry name" value="Ribulose bisphosphate carboxylase large chain"/>
    <property type="match status" value="1"/>
</dbReference>
<dbReference type="FunFam" id="3.30.70.150:FF:000001">
    <property type="entry name" value="Ribulose bisphosphate carboxylase large chain"/>
    <property type="match status" value="1"/>
</dbReference>
<dbReference type="Gene3D" id="3.20.20.110">
    <property type="entry name" value="Ribulose bisphosphate carboxylase, large subunit, C-terminal domain"/>
    <property type="match status" value="1"/>
</dbReference>
<dbReference type="Gene3D" id="3.30.70.150">
    <property type="entry name" value="RuBisCO large subunit, N-terminal domain"/>
    <property type="match status" value="1"/>
</dbReference>
<dbReference type="HAMAP" id="MF_01338">
    <property type="entry name" value="RuBisCO_L_type1"/>
    <property type="match status" value="1"/>
</dbReference>
<dbReference type="InterPro" id="IPR033966">
    <property type="entry name" value="RuBisCO"/>
</dbReference>
<dbReference type="InterPro" id="IPR020878">
    <property type="entry name" value="RuBisCo_large_chain_AS"/>
</dbReference>
<dbReference type="InterPro" id="IPR000685">
    <property type="entry name" value="RuBisCO_lsu_C"/>
</dbReference>
<dbReference type="InterPro" id="IPR036376">
    <property type="entry name" value="RuBisCO_lsu_C_sf"/>
</dbReference>
<dbReference type="InterPro" id="IPR017443">
    <property type="entry name" value="RuBisCO_lsu_fd_N"/>
</dbReference>
<dbReference type="InterPro" id="IPR036422">
    <property type="entry name" value="RuBisCO_lsu_N_sf"/>
</dbReference>
<dbReference type="InterPro" id="IPR020888">
    <property type="entry name" value="RuBisCO_lsuI"/>
</dbReference>
<dbReference type="NCBIfam" id="NF003252">
    <property type="entry name" value="PRK04208.1"/>
    <property type="match status" value="1"/>
</dbReference>
<dbReference type="PANTHER" id="PTHR42704">
    <property type="entry name" value="RIBULOSE BISPHOSPHATE CARBOXYLASE"/>
    <property type="match status" value="1"/>
</dbReference>
<dbReference type="PANTHER" id="PTHR42704:SF15">
    <property type="entry name" value="RIBULOSE BISPHOSPHATE CARBOXYLASE LARGE CHAIN"/>
    <property type="match status" value="1"/>
</dbReference>
<dbReference type="Pfam" id="PF00016">
    <property type="entry name" value="RuBisCO_large"/>
    <property type="match status" value="1"/>
</dbReference>
<dbReference type="Pfam" id="PF02788">
    <property type="entry name" value="RuBisCO_large_N"/>
    <property type="match status" value="1"/>
</dbReference>
<dbReference type="SFLD" id="SFLDG01052">
    <property type="entry name" value="RuBisCO"/>
    <property type="match status" value="1"/>
</dbReference>
<dbReference type="SFLD" id="SFLDS00014">
    <property type="entry name" value="RuBisCO"/>
    <property type="match status" value="1"/>
</dbReference>
<dbReference type="SFLD" id="SFLDG00301">
    <property type="entry name" value="RuBisCO-like_proteins"/>
    <property type="match status" value="1"/>
</dbReference>
<dbReference type="SUPFAM" id="SSF51649">
    <property type="entry name" value="RuBisCo, C-terminal domain"/>
    <property type="match status" value="1"/>
</dbReference>
<dbReference type="SUPFAM" id="SSF54966">
    <property type="entry name" value="RuBisCO, large subunit, small (N-terminal) domain"/>
    <property type="match status" value="1"/>
</dbReference>
<dbReference type="PROSITE" id="PS00157">
    <property type="entry name" value="RUBISCO_LARGE"/>
    <property type="match status" value="1"/>
</dbReference>
<keyword id="KW-0007">Acetylation</keyword>
<keyword id="KW-0113">Calvin cycle</keyword>
<keyword id="KW-0120">Carbon dioxide fixation</keyword>
<keyword id="KW-0150">Chloroplast</keyword>
<keyword id="KW-1015">Disulfide bond</keyword>
<keyword id="KW-0456">Lyase</keyword>
<keyword id="KW-0460">Magnesium</keyword>
<keyword id="KW-0479">Metal-binding</keyword>
<keyword id="KW-0488">Methylation</keyword>
<keyword id="KW-0503">Monooxygenase</keyword>
<keyword id="KW-0560">Oxidoreductase</keyword>
<keyword id="KW-0601">Photorespiration</keyword>
<keyword id="KW-0602">Photosynthesis</keyword>
<keyword id="KW-0934">Plastid</keyword>
<accession>P48711</accession>
<accession>O47038</accession>
<proteinExistence type="evidence at transcript level"/>
<reference key="1">
    <citation type="journal article" date="1995" name="Plant Physiol.">
        <title>Short duplication in a cDNA clone of the rbcL gene from Picea abies.</title>
        <authorList>
            <person name="Relle M."/>
            <person name="Fuerst P."/>
            <person name="Wild A."/>
        </authorList>
    </citation>
    <scope>NUCLEOTIDE SEQUENCE [MRNA]</scope>
    <source>
        <tissue>Needle</tissue>
    </source>
</reference>
<reference key="2">
    <citation type="submission" date="1997-08" db="EMBL/GenBank/DDBJ databases">
        <title>Picea abies chloroplast genome fragment of 8.7 kb including atpE, atpB, rbcL, trnR, accD, and psaI.</title>
        <authorList>
            <person name="Sutter A."/>
            <person name="Philipps A."/>
            <person name="Wild A."/>
        </authorList>
    </citation>
    <scope>NUCLEOTIDE SEQUENCE [GENOMIC DNA]</scope>
</reference>